<gene>
    <name evidence="1" type="primary">lspA</name>
    <name type="ordered locus">SCO2074</name>
    <name type="ORF">SC4A10.07c</name>
</gene>
<accession>Q9S2X7</accession>
<keyword id="KW-0064">Aspartyl protease</keyword>
<keyword id="KW-1003">Cell membrane</keyword>
<keyword id="KW-0378">Hydrolase</keyword>
<keyword id="KW-0472">Membrane</keyword>
<keyword id="KW-0645">Protease</keyword>
<keyword id="KW-1185">Reference proteome</keyword>
<keyword id="KW-0812">Transmembrane</keyword>
<keyword id="KW-1133">Transmembrane helix</keyword>
<organism>
    <name type="scientific">Streptomyces coelicolor (strain ATCC BAA-471 / A3(2) / M145)</name>
    <dbReference type="NCBI Taxonomy" id="100226"/>
    <lineage>
        <taxon>Bacteria</taxon>
        <taxon>Bacillati</taxon>
        <taxon>Actinomycetota</taxon>
        <taxon>Actinomycetes</taxon>
        <taxon>Kitasatosporales</taxon>
        <taxon>Streptomycetaceae</taxon>
        <taxon>Streptomyces</taxon>
        <taxon>Streptomyces albidoflavus group</taxon>
    </lineage>
</organism>
<protein>
    <recommendedName>
        <fullName evidence="1">Lipoprotein signal peptidase</fullName>
        <ecNumber evidence="1">3.4.23.36</ecNumber>
    </recommendedName>
    <alternativeName>
        <fullName evidence="1">Prolipoprotein signal peptidase</fullName>
    </alternativeName>
    <alternativeName>
        <fullName evidence="1">Signal peptidase II</fullName>
        <shortName evidence="1">SPase II</shortName>
    </alternativeName>
</protein>
<feature type="chain" id="PRO_0000178822" description="Lipoprotein signal peptidase">
    <location>
        <begin position="1"/>
        <end position="204"/>
    </location>
</feature>
<feature type="transmembrane region" description="Helical" evidence="1">
    <location>
        <begin position="50"/>
        <end position="70"/>
    </location>
</feature>
<feature type="transmembrane region" description="Helical" evidence="1">
    <location>
        <begin position="100"/>
        <end position="120"/>
    </location>
</feature>
<feature type="transmembrane region" description="Helical" evidence="1">
    <location>
        <begin position="126"/>
        <end position="146"/>
    </location>
</feature>
<feature type="transmembrane region" description="Helical" evidence="1">
    <location>
        <begin position="170"/>
        <end position="190"/>
    </location>
</feature>
<feature type="region of interest" description="Disordered" evidence="2">
    <location>
        <begin position="1"/>
        <end position="42"/>
    </location>
</feature>
<feature type="compositionally biased region" description="Basic and acidic residues" evidence="2">
    <location>
        <begin position="20"/>
        <end position="42"/>
    </location>
</feature>
<feature type="active site" evidence="1">
    <location>
        <position position="163"/>
    </location>
</feature>
<feature type="active site" evidence="1">
    <location>
        <position position="177"/>
    </location>
</feature>
<dbReference type="EC" id="3.4.23.36" evidence="1"/>
<dbReference type="EMBL" id="AL939111">
    <property type="protein sequence ID" value="CAB51983.1"/>
    <property type="molecule type" value="Genomic_DNA"/>
</dbReference>
<dbReference type="PIR" id="T34944">
    <property type="entry name" value="T34944"/>
</dbReference>
<dbReference type="RefSeq" id="NP_626333.1">
    <property type="nucleotide sequence ID" value="NC_003888.3"/>
</dbReference>
<dbReference type="RefSeq" id="WP_011028127.1">
    <property type="nucleotide sequence ID" value="NZ_VNID01000001.1"/>
</dbReference>
<dbReference type="SMR" id="Q9S2X7"/>
<dbReference type="FunCoup" id="Q9S2X7">
    <property type="interactions" value="91"/>
</dbReference>
<dbReference type="STRING" id="100226.gene:17759672"/>
<dbReference type="PaxDb" id="100226-SCO2074"/>
<dbReference type="KEGG" id="sco:SCO2074"/>
<dbReference type="PATRIC" id="fig|100226.15.peg.2106"/>
<dbReference type="eggNOG" id="COG0597">
    <property type="taxonomic scope" value="Bacteria"/>
</dbReference>
<dbReference type="HOGENOM" id="CLU_083252_2_2_11"/>
<dbReference type="InParanoid" id="Q9S2X7"/>
<dbReference type="OrthoDB" id="4308908at2"/>
<dbReference type="PhylomeDB" id="Q9S2X7"/>
<dbReference type="UniPathway" id="UPA00665"/>
<dbReference type="Proteomes" id="UP000001973">
    <property type="component" value="Chromosome"/>
</dbReference>
<dbReference type="GO" id="GO:0005886">
    <property type="term" value="C:plasma membrane"/>
    <property type="evidence" value="ECO:0000318"/>
    <property type="project" value="GO_Central"/>
</dbReference>
<dbReference type="GO" id="GO:0004190">
    <property type="term" value="F:aspartic-type endopeptidase activity"/>
    <property type="evidence" value="ECO:0007669"/>
    <property type="project" value="UniProtKB-UniRule"/>
</dbReference>
<dbReference type="GO" id="GO:0004175">
    <property type="term" value="F:endopeptidase activity"/>
    <property type="evidence" value="ECO:0000318"/>
    <property type="project" value="GO_Central"/>
</dbReference>
<dbReference type="GO" id="GO:0006508">
    <property type="term" value="P:proteolysis"/>
    <property type="evidence" value="ECO:0007669"/>
    <property type="project" value="UniProtKB-KW"/>
</dbReference>
<dbReference type="HAMAP" id="MF_00161">
    <property type="entry name" value="LspA"/>
    <property type="match status" value="1"/>
</dbReference>
<dbReference type="InterPro" id="IPR001872">
    <property type="entry name" value="Peptidase_A8"/>
</dbReference>
<dbReference type="NCBIfam" id="TIGR00077">
    <property type="entry name" value="lspA"/>
    <property type="match status" value="1"/>
</dbReference>
<dbReference type="PANTHER" id="PTHR33695">
    <property type="entry name" value="LIPOPROTEIN SIGNAL PEPTIDASE"/>
    <property type="match status" value="1"/>
</dbReference>
<dbReference type="PANTHER" id="PTHR33695:SF1">
    <property type="entry name" value="LIPOPROTEIN SIGNAL PEPTIDASE"/>
    <property type="match status" value="1"/>
</dbReference>
<dbReference type="Pfam" id="PF01252">
    <property type="entry name" value="Peptidase_A8"/>
    <property type="match status" value="1"/>
</dbReference>
<dbReference type="PRINTS" id="PR00781">
    <property type="entry name" value="LIPOSIGPTASE"/>
</dbReference>
<dbReference type="PROSITE" id="PS00855">
    <property type="entry name" value="SPASE_II"/>
    <property type="match status" value="1"/>
</dbReference>
<proteinExistence type="inferred from homology"/>
<comment type="function">
    <text evidence="1">This protein specifically catalyzes the removal of signal peptides from prolipoproteins.</text>
</comment>
<comment type="catalytic activity">
    <reaction evidence="1">
        <text>Release of signal peptides from bacterial membrane prolipoproteins. Hydrolyzes -Xaa-Yaa-Zaa-|-(S,diacylglyceryl)Cys-, in which Xaa is hydrophobic (preferably Leu), and Yaa (Ala or Ser) and Zaa (Gly or Ala) have small, neutral side chains.</text>
        <dbReference type="EC" id="3.4.23.36"/>
    </reaction>
</comment>
<comment type="pathway">
    <text evidence="1">Protein modification; lipoprotein biosynthesis (signal peptide cleavage).</text>
</comment>
<comment type="subcellular location">
    <subcellularLocation>
        <location evidence="1">Cell membrane</location>
        <topology evidence="1">Multi-pass membrane protein</topology>
    </subcellularLocation>
</comment>
<comment type="similarity">
    <text evidence="1">Belongs to the peptidase A8 family.</text>
</comment>
<name>LSPA_STRCO</name>
<sequence length="204" mass="21971">MAEAERIIGTPDIPDAAGEGQERPDADPEREQQEQEQAPERTRGKRRVAVLFAVALFAYLLDLGSKMLVVAKLEHHEPIEIIGDWLRFAAIRNAGAAFGFGEAFTIIFTVIAAAVIVVIARLARKLHSLPWAIALGLLLGGALGNLTDRIFRAPGVFEGAVVDFIAPKHFAVFNLADSAIVCGGILIVILSFRGLDPDGTVHKD</sequence>
<reference key="1">
    <citation type="journal article" date="2002" name="Nature">
        <title>Complete genome sequence of the model actinomycete Streptomyces coelicolor A3(2).</title>
        <authorList>
            <person name="Bentley S.D."/>
            <person name="Chater K.F."/>
            <person name="Cerdeno-Tarraga A.-M."/>
            <person name="Challis G.L."/>
            <person name="Thomson N.R."/>
            <person name="James K.D."/>
            <person name="Harris D.E."/>
            <person name="Quail M.A."/>
            <person name="Kieser H."/>
            <person name="Harper D."/>
            <person name="Bateman A."/>
            <person name="Brown S."/>
            <person name="Chandra G."/>
            <person name="Chen C.W."/>
            <person name="Collins M."/>
            <person name="Cronin A."/>
            <person name="Fraser A."/>
            <person name="Goble A."/>
            <person name="Hidalgo J."/>
            <person name="Hornsby T."/>
            <person name="Howarth S."/>
            <person name="Huang C.-H."/>
            <person name="Kieser T."/>
            <person name="Larke L."/>
            <person name="Murphy L.D."/>
            <person name="Oliver K."/>
            <person name="O'Neil S."/>
            <person name="Rabbinowitsch E."/>
            <person name="Rajandream M.A."/>
            <person name="Rutherford K.M."/>
            <person name="Rutter S."/>
            <person name="Seeger K."/>
            <person name="Saunders D."/>
            <person name="Sharp S."/>
            <person name="Squares R."/>
            <person name="Squares S."/>
            <person name="Taylor K."/>
            <person name="Warren T."/>
            <person name="Wietzorrek A."/>
            <person name="Woodward J.R."/>
            <person name="Barrell B.G."/>
            <person name="Parkhill J."/>
            <person name="Hopwood D.A."/>
        </authorList>
    </citation>
    <scope>NUCLEOTIDE SEQUENCE [LARGE SCALE GENOMIC DNA]</scope>
    <source>
        <strain>ATCC BAA-471 / A3(2) / M145</strain>
    </source>
</reference>
<evidence type="ECO:0000255" key="1">
    <source>
        <dbReference type="HAMAP-Rule" id="MF_00161"/>
    </source>
</evidence>
<evidence type="ECO:0000256" key="2">
    <source>
        <dbReference type="SAM" id="MobiDB-lite"/>
    </source>
</evidence>